<name>G6PI_NITOC</name>
<gene>
    <name evidence="1" type="primary">pgi</name>
    <name type="ordered locus">Noc_0903</name>
</gene>
<keyword id="KW-0963">Cytoplasm</keyword>
<keyword id="KW-0312">Gluconeogenesis</keyword>
<keyword id="KW-0324">Glycolysis</keyword>
<keyword id="KW-0413">Isomerase</keyword>
<keyword id="KW-1185">Reference proteome</keyword>
<proteinExistence type="inferred from homology"/>
<protein>
    <recommendedName>
        <fullName evidence="1">Glucose-6-phosphate isomerase</fullName>
        <shortName evidence="1">GPI</shortName>
        <ecNumber evidence="1">5.3.1.9</ecNumber>
    </recommendedName>
    <alternativeName>
        <fullName evidence="1">Phosphoglucose isomerase</fullName>
        <shortName evidence="1">PGI</shortName>
    </alternativeName>
    <alternativeName>
        <fullName evidence="1">Phosphohexose isomerase</fullName>
        <shortName evidence="1">PHI</shortName>
    </alternativeName>
</protein>
<comment type="function">
    <text evidence="1">Catalyzes the reversible isomerization of glucose-6-phosphate to fructose-6-phosphate.</text>
</comment>
<comment type="catalytic activity">
    <reaction evidence="1">
        <text>alpha-D-glucose 6-phosphate = beta-D-fructose 6-phosphate</text>
        <dbReference type="Rhea" id="RHEA:11816"/>
        <dbReference type="ChEBI" id="CHEBI:57634"/>
        <dbReference type="ChEBI" id="CHEBI:58225"/>
        <dbReference type="EC" id="5.3.1.9"/>
    </reaction>
</comment>
<comment type="pathway">
    <text evidence="1">Carbohydrate biosynthesis; gluconeogenesis.</text>
</comment>
<comment type="pathway">
    <text evidence="1">Carbohydrate degradation; glycolysis; D-glyceraldehyde 3-phosphate and glycerone phosphate from D-glucose: step 2/4.</text>
</comment>
<comment type="subcellular location">
    <subcellularLocation>
        <location evidence="1">Cytoplasm</location>
    </subcellularLocation>
</comment>
<comment type="similarity">
    <text evidence="1">Belongs to the GPI family.</text>
</comment>
<feature type="chain" id="PRO_0000230921" description="Glucose-6-phosphate isomerase">
    <location>
        <begin position="1"/>
        <end position="549"/>
    </location>
</feature>
<feature type="active site" description="Proton donor" evidence="1">
    <location>
        <position position="354"/>
    </location>
</feature>
<feature type="active site" evidence="1">
    <location>
        <position position="385"/>
    </location>
</feature>
<feature type="active site" evidence="1">
    <location>
        <position position="513"/>
    </location>
</feature>
<sequence>MKPYLAQARSWASLLQHYGCIKKQHMRDLFAADPQRFDKFSLIFNGILFDFSKNRITEETLKLLLDLARERELQQGISRMFAGEPINNTENRPVLHVALRNRANRPIMVKGKDVMPQVNVVLERMGKFCDRVHRGQWRGFSGERLTDIVNIGIGGSDLGPAMVTEALQPYAKSGFRVHFVSNIDGTQLAETLKTIRPETALFVISSKTFTTQETLTNAHSARNWFLRAAPDDKAIAKHFIAVSTNRSEVEKFGIDPCNMFEFWDWVGGRYSLWSAIGLSIALYLGMENFEQLLEGAHEMDKHFQETPLKQNIPVIAALVGIWNINFLGAQSHAVLPYDQYLERFPAYLQQLEMESNGKHVTRGGASVNYATGNVIWGAPGTNGQHAFFQLLHQGTPLITADFLASAESHNPLGEHHQILLSNFFAQTEALMKGKDEAEVRAELEEANLAKGEVEALIPHKLFDGNRPSNSFLFSKLTPWTLGALIAFYEHKVFTQGLIWDINSFDQWGVELGKQLATTILPELQGGEEVNSHDSSTNGLINYYKRIRHL</sequence>
<dbReference type="EC" id="5.3.1.9" evidence="1"/>
<dbReference type="EMBL" id="CP000127">
    <property type="protein sequence ID" value="ABA57415.1"/>
    <property type="molecule type" value="Genomic_DNA"/>
</dbReference>
<dbReference type="RefSeq" id="WP_002810426.1">
    <property type="nucleotide sequence ID" value="NC_007484.1"/>
</dbReference>
<dbReference type="SMR" id="Q3JCN1"/>
<dbReference type="FunCoup" id="Q3JCN1">
    <property type="interactions" value="506"/>
</dbReference>
<dbReference type="STRING" id="323261.Noc_0903"/>
<dbReference type="KEGG" id="noc:Noc_0903"/>
<dbReference type="eggNOG" id="COG0166">
    <property type="taxonomic scope" value="Bacteria"/>
</dbReference>
<dbReference type="HOGENOM" id="CLU_017947_3_1_6"/>
<dbReference type="InParanoid" id="Q3JCN1"/>
<dbReference type="UniPathway" id="UPA00109">
    <property type="reaction ID" value="UER00181"/>
</dbReference>
<dbReference type="UniPathway" id="UPA00138"/>
<dbReference type="Proteomes" id="UP000006838">
    <property type="component" value="Chromosome"/>
</dbReference>
<dbReference type="GO" id="GO:0005829">
    <property type="term" value="C:cytosol"/>
    <property type="evidence" value="ECO:0007669"/>
    <property type="project" value="TreeGrafter"/>
</dbReference>
<dbReference type="GO" id="GO:0097367">
    <property type="term" value="F:carbohydrate derivative binding"/>
    <property type="evidence" value="ECO:0007669"/>
    <property type="project" value="InterPro"/>
</dbReference>
<dbReference type="GO" id="GO:0004347">
    <property type="term" value="F:glucose-6-phosphate isomerase activity"/>
    <property type="evidence" value="ECO:0007669"/>
    <property type="project" value="UniProtKB-UniRule"/>
</dbReference>
<dbReference type="GO" id="GO:0048029">
    <property type="term" value="F:monosaccharide binding"/>
    <property type="evidence" value="ECO:0007669"/>
    <property type="project" value="TreeGrafter"/>
</dbReference>
<dbReference type="GO" id="GO:0006094">
    <property type="term" value="P:gluconeogenesis"/>
    <property type="evidence" value="ECO:0007669"/>
    <property type="project" value="UniProtKB-UniRule"/>
</dbReference>
<dbReference type="GO" id="GO:0051156">
    <property type="term" value="P:glucose 6-phosphate metabolic process"/>
    <property type="evidence" value="ECO:0007669"/>
    <property type="project" value="TreeGrafter"/>
</dbReference>
<dbReference type="GO" id="GO:0006096">
    <property type="term" value="P:glycolytic process"/>
    <property type="evidence" value="ECO:0007669"/>
    <property type="project" value="UniProtKB-UniRule"/>
</dbReference>
<dbReference type="CDD" id="cd05015">
    <property type="entry name" value="SIS_PGI_1"/>
    <property type="match status" value="1"/>
</dbReference>
<dbReference type="CDD" id="cd05016">
    <property type="entry name" value="SIS_PGI_2"/>
    <property type="match status" value="1"/>
</dbReference>
<dbReference type="FunFam" id="1.10.1390.10:FF:000001">
    <property type="entry name" value="Glucose-6-phosphate isomerase"/>
    <property type="match status" value="1"/>
</dbReference>
<dbReference type="FunFam" id="3.40.50.10490:FF:000004">
    <property type="entry name" value="Glucose-6-phosphate isomerase"/>
    <property type="match status" value="1"/>
</dbReference>
<dbReference type="Gene3D" id="1.10.1390.10">
    <property type="match status" value="1"/>
</dbReference>
<dbReference type="Gene3D" id="3.40.50.10490">
    <property type="entry name" value="Glucose-6-phosphate isomerase like protein, domain 1"/>
    <property type="match status" value="2"/>
</dbReference>
<dbReference type="HAMAP" id="MF_00473">
    <property type="entry name" value="G6P_isomerase"/>
    <property type="match status" value="1"/>
</dbReference>
<dbReference type="InterPro" id="IPR001672">
    <property type="entry name" value="G6P_Isomerase"/>
</dbReference>
<dbReference type="InterPro" id="IPR023096">
    <property type="entry name" value="G6P_Isomerase_C"/>
</dbReference>
<dbReference type="InterPro" id="IPR018189">
    <property type="entry name" value="Phosphoglucose_isomerase_CS"/>
</dbReference>
<dbReference type="InterPro" id="IPR046348">
    <property type="entry name" value="SIS_dom_sf"/>
</dbReference>
<dbReference type="InterPro" id="IPR035476">
    <property type="entry name" value="SIS_PGI_1"/>
</dbReference>
<dbReference type="InterPro" id="IPR035482">
    <property type="entry name" value="SIS_PGI_2"/>
</dbReference>
<dbReference type="NCBIfam" id="NF001211">
    <property type="entry name" value="PRK00179.1"/>
    <property type="match status" value="1"/>
</dbReference>
<dbReference type="PANTHER" id="PTHR11469">
    <property type="entry name" value="GLUCOSE-6-PHOSPHATE ISOMERASE"/>
    <property type="match status" value="1"/>
</dbReference>
<dbReference type="PANTHER" id="PTHR11469:SF1">
    <property type="entry name" value="GLUCOSE-6-PHOSPHATE ISOMERASE"/>
    <property type="match status" value="1"/>
</dbReference>
<dbReference type="Pfam" id="PF00342">
    <property type="entry name" value="PGI"/>
    <property type="match status" value="1"/>
</dbReference>
<dbReference type="PRINTS" id="PR00662">
    <property type="entry name" value="G6PISOMERASE"/>
</dbReference>
<dbReference type="SUPFAM" id="SSF53697">
    <property type="entry name" value="SIS domain"/>
    <property type="match status" value="1"/>
</dbReference>
<dbReference type="PROSITE" id="PS00765">
    <property type="entry name" value="P_GLUCOSE_ISOMERASE_1"/>
    <property type="match status" value="1"/>
</dbReference>
<dbReference type="PROSITE" id="PS00174">
    <property type="entry name" value="P_GLUCOSE_ISOMERASE_2"/>
    <property type="match status" value="1"/>
</dbReference>
<dbReference type="PROSITE" id="PS51463">
    <property type="entry name" value="P_GLUCOSE_ISOMERASE_3"/>
    <property type="match status" value="1"/>
</dbReference>
<accession>Q3JCN1</accession>
<evidence type="ECO:0000255" key="1">
    <source>
        <dbReference type="HAMAP-Rule" id="MF_00473"/>
    </source>
</evidence>
<reference key="1">
    <citation type="journal article" date="2006" name="Appl. Environ. Microbiol.">
        <title>Complete genome sequence of the marine, chemolithoautotrophic, ammonia-oxidizing bacterium Nitrosococcus oceani ATCC 19707.</title>
        <authorList>
            <person name="Klotz M.G."/>
            <person name="Arp D.J."/>
            <person name="Chain P.S.G."/>
            <person name="El-Sheikh A.F."/>
            <person name="Hauser L.J."/>
            <person name="Hommes N.G."/>
            <person name="Larimer F.W."/>
            <person name="Malfatti S.A."/>
            <person name="Norton J.M."/>
            <person name="Poret-Peterson A.T."/>
            <person name="Vergez L.M."/>
            <person name="Ward B.B."/>
        </authorList>
    </citation>
    <scope>NUCLEOTIDE SEQUENCE [LARGE SCALE GENOMIC DNA]</scope>
    <source>
        <strain>ATCC 19707 / BCRC 17464 / JCM 30415 / NCIMB 11848 / C-107</strain>
    </source>
</reference>
<organism>
    <name type="scientific">Nitrosococcus oceani (strain ATCC 19707 / BCRC 17464 / JCM 30415 / NCIMB 11848 / C-107)</name>
    <dbReference type="NCBI Taxonomy" id="323261"/>
    <lineage>
        <taxon>Bacteria</taxon>
        <taxon>Pseudomonadati</taxon>
        <taxon>Pseudomonadota</taxon>
        <taxon>Gammaproteobacteria</taxon>
        <taxon>Chromatiales</taxon>
        <taxon>Chromatiaceae</taxon>
        <taxon>Nitrosococcus</taxon>
    </lineage>
</organism>